<keyword id="KW-1003">Cell membrane</keyword>
<keyword id="KW-0297">G-protein coupled receptor</keyword>
<keyword id="KW-0325">Glycoprotein</keyword>
<keyword id="KW-0449">Lipoprotein</keyword>
<keyword id="KW-0472">Membrane</keyword>
<keyword id="KW-0564">Palmitate</keyword>
<keyword id="KW-0675">Receptor</keyword>
<keyword id="KW-1185">Reference proteome</keyword>
<keyword id="KW-0807">Transducer</keyword>
<keyword id="KW-0812">Transmembrane</keyword>
<keyword id="KW-1133">Transmembrane helix</keyword>
<name>MC5R_PANTR</name>
<dbReference type="EMBL" id="AF208691">
    <property type="protein sequence ID" value="AAF19441.1"/>
    <property type="molecule type" value="Genomic_DNA"/>
</dbReference>
<dbReference type="RefSeq" id="NP_001009119.1">
    <property type="nucleotide sequence ID" value="NM_001009119.1"/>
</dbReference>
<dbReference type="SMR" id="Q9TT23"/>
<dbReference type="FunCoup" id="Q9TT23">
    <property type="interactions" value="974"/>
</dbReference>
<dbReference type="GlyCosmos" id="Q9TT23">
    <property type="glycosylation" value="4 sites, No reported glycans"/>
</dbReference>
<dbReference type="GeneID" id="468599"/>
<dbReference type="KEGG" id="ptr:468599"/>
<dbReference type="CTD" id="4161"/>
<dbReference type="InParanoid" id="Q9TT23"/>
<dbReference type="OrthoDB" id="6952at9604"/>
<dbReference type="Proteomes" id="UP000002277">
    <property type="component" value="Unplaced"/>
</dbReference>
<dbReference type="GO" id="GO:0005737">
    <property type="term" value="C:cytoplasm"/>
    <property type="evidence" value="ECO:0000318"/>
    <property type="project" value="GO_Central"/>
</dbReference>
<dbReference type="GO" id="GO:0005886">
    <property type="term" value="C:plasma membrane"/>
    <property type="evidence" value="ECO:0000318"/>
    <property type="project" value="GO_Central"/>
</dbReference>
<dbReference type="GO" id="GO:0004977">
    <property type="term" value="F:melanocortin receptor activity"/>
    <property type="evidence" value="ECO:0000318"/>
    <property type="project" value="GO_Central"/>
</dbReference>
<dbReference type="GO" id="GO:0007189">
    <property type="term" value="P:adenylate cyclase-activating G protein-coupled receptor signaling pathway"/>
    <property type="evidence" value="ECO:0000318"/>
    <property type="project" value="GO_Central"/>
</dbReference>
<dbReference type="GO" id="GO:0019222">
    <property type="term" value="P:regulation of metabolic process"/>
    <property type="evidence" value="ECO:0000318"/>
    <property type="project" value="GO_Central"/>
</dbReference>
<dbReference type="CDD" id="cd15354">
    <property type="entry name" value="7tmA_MC5R"/>
    <property type="match status" value="1"/>
</dbReference>
<dbReference type="FunFam" id="1.20.1070.10:FF:000077">
    <property type="entry name" value="Melanocortin receptor 4"/>
    <property type="match status" value="1"/>
</dbReference>
<dbReference type="Gene3D" id="1.20.1070.10">
    <property type="entry name" value="Rhodopsin 7-helix transmembrane proteins"/>
    <property type="match status" value="1"/>
</dbReference>
<dbReference type="InterPro" id="IPR000276">
    <property type="entry name" value="GPCR_Rhodpsn"/>
</dbReference>
<dbReference type="InterPro" id="IPR017452">
    <property type="entry name" value="GPCR_Rhodpsn_7TM"/>
</dbReference>
<dbReference type="InterPro" id="IPR001908">
    <property type="entry name" value="MC3-5R"/>
</dbReference>
<dbReference type="InterPro" id="IPR000621">
    <property type="entry name" value="Melancort_rcpt_5"/>
</dbReference>
<dbReference type="InterPro" id="IPR001671">
    <property type="entry name" value="Melcrt_ACTH_rcpt"/>
</dbReference>
<dbReference type="PANTHER" id="PTHR22750">
    <property type="entry name" value="G-PROTEIN COUPLED RECEPTOR"/>
    <property type="match status" value="1"/>
</dbReference>
<dbReference type="Pfam" id="PF00001">
    <property type="entry name" value="7tm_1"/>
    <property type="match status" value="1"/>
</dbReference>
<dbReference type="PRINTS" id="PR00237">
    <property type="entry name" value="GPCRRHODOPSN"/>
</dbReference>
<dbReference type="PRINTS" id="PR00534">
    <property type="entry name" value="MCRFAMILY"/>
</dbReference>
<dbReference type="PRINTS" id="PR00535">
    <property type="entry name" value="MELNOCORTINR"/>
</dbReference>
<dbReference type="PRINTS" id="PR01063">
    <property type="entry name" value="MELNOCORTN5R"/>
</dbReference>
<dbReference type="SMART" id="SM01381">
    <property type="entry name" value="7TM_GPCR_Srsx"/>
    <property type="match status" value="1"/>
</dbReference>
<dbReference type="SUPFAM" id="SSF81321">
    <property type="entry name" value="Family A G protein-coupled receptor-like"/>
    <property type="match status" value="1"/>
</dbReference>
<dbReference type="PROSITE" id="PS00237">
    <property type="entry name" value="G_PROTEIN_RECEP_F1_1"/>
    <property type="match status" value="1"/>
</dbReference>
<dbReference type="PROSITE" id="PS50262">
    <property type="entry name" value="G_PROTEIN_RECEP_F1_2"/>
    <property type="match status" value="1"/>
</dbReference>
<feature type="chain" id="PRO_0000069730" description="Melanocortin receptor 5">
    <location>
        <begin position="1"/>
        <end position="325"/>
    </location>
</feature>
<feature type="topological domain" description="Extracellular" evidence="1">
    <location>
        <begin position="1"/>
        <end position="37"/>
    </location>
</feature>
<feature type="transmembrane region" description="Helical; Name=1" evidence="1">
    <location>
        <begin position="38"/>
        <end position="61"/>
    </location>
</feature>
<feature type="topological domain" description="Cytoplasmic" evidence="1">
    <location>
        <begin position="62"/>
        <end position="73"/>
    </location>
</feature>
<feature type="transmembrane region" description="Helical; Name=2" evidence="1">
    <location>
        <begin position="74"/>
        <end position="97"/>
    </location>
</feature>
<feature type="topological domain" description="Extracellular" evidence="1">
    <location>
        <begin position="98"/>
        <end position="114"/>
    </location>
</feature>
<feature type="transmembrane region" description="Helical; Name=3" evidence="1">
    <location>
        <begin position="115"/>
        <end position="138"/>
    </location>
</feature>
<feature type="topological domain" description="Cytoplasmic" evidence="1">
    <location>
        <begin position="139"/>
        <end position="155"/>
    </location>
</feature>
<feature type="transmembrane region" description="Helical; Name=4" evidence="1">
    <location>
        <begin position="156"/>
        <end position="179"/>
    </location>
</feature>
<feature type="topological domain" description="Extracellular" evidence="1">
    <location>
        <begin position="180"/>
        <end position="186"/>
    </location>
</feature>
<feature type="transmembrane region" description="Helical; Name=5" evidence="1">
    <location>
        <begin position="187"/>
        <end position="211"/>
    </location>
</feature>
<feature type="topological domain" description="Cytoplasmic" evidence="1">
    <location>
        <begin position="212"/>
        <end position="239"/>
    </location>
</feature>
<feature type="transmembrane region" description="Helical; Name=6" evidence="1">
    <location>
        <begin position="240"/>
        <end position="265"/>
    </location>
</feature>
<feature type="topological domain" description="Extracellular" evidence="1">
    <location>
        <begin position="266"/>
        <end position="273"/>
    </location>
</feature>
<feature type="transmembrane region" description="Helical; Name=7" evidence="1">
    <location>
        <begin position="274"/>
        <end position="297"/>
    </location>
</feature>
<feature type="topological domain" description="Cytoplasmic" evidence="1">
    <location>
        <begin position="298"/>
        <end position="325"/>
    </location>
</feature>
<feature type="lipid moiety-binding region" description="S-palmitoyl cysteine" evidence="1">
    <location>
        <position position="311"/>
    </location>
</feature>
<feature type="lipid moiety-binding region" description="S-palmitoyl cysteine" evidence="1">
    <location>
        <position position="312"/>
    </location>
</feature>
<feature type="glycosylation site" description="N-linked (GlcNAc...) asparagine" evidence="1">
    <location>
        <position position="2"/>
    </location>
</feature>
<feature type="glycosylation site" description="N-linked (GlcNAc...) asparagine" evidence="1">
    <location>
        <position position="15"/>
    </location>
</feature>
<feature type="glycosylation site" description="N-linked (GlcNAc...) asparagine" evidence="1">
    <location>
        <position position="20"/>
    </location>
</feature>
<feature type="glycosylation site" description="N-linked (GlcNAc...) asparagine" evidence="1">
    <location>
        <position position="28"/>
    </location>
</feature>
<organism>
    <name type="scientific">Pan troglodytes</name>
    <name type="common">Chimpanzee</name>
    <dbReference type="NCBI Taxonomy" id="9598"/>
    <lineage>
        <taxon>Eukaryota</taxon>
        <taxon>Metazoa</taxon>
        <taxon>Chordata</taxon>
        <taxon>Craniata</taxon>
        <taxon>Vertebrata</taxon>
        <taxon>Euteleostomi</taxon>
        <taxon>Mammalia</taxon>
        <taxon>Eutheria</taxon>
        <taxon>Euarchontoglires</taxon>
        <taxon>Primates</taxon>
        <taxon>Haplorrhini</taxon>
        <taxon>Catarrhini</taxon>
        <taxon>Hominidae</taxon>
        <taxon>Pan</taxon>
    </lineage>
</organism>
<sequence length="325" mass="36647">MNSSFHLHFLDLNLNATEGNLSGPNVKNKSSPCEDMGIAVEVFLTLGVISLLENILVIGAIVKNKNLHSPMYFFVCSLAVADMLVSMSSAWETITIYLLNNKHLVIADAFVRHIDNVFDSMICISVVASMCSLLAIAVDRYVTIFYALRYHHIMTARRSGAIIAGIWAFCTGCGIVFILYSESTYVILCLISMFFAMLFLLVSLYIHMFLLARTHVKRIAALPRASSARQRTSMQGAVTVTMLLGVFTVCWAPFFLHLTLMLSCPQNLYCSCFMSHFNMYLILIMCNSVMDPLIYAFRSQEMRKTFKEIICCRGFRIACSFPRRD</sequence>
<comment type="function">
    <text>Receptor for MSH (alpha, beta and gamma) and ACTH. The activity of this receptor is mediated by G proteins which activate adenylate cyclase. This receptor is a possible mediator of the immunomodulation properties of melanocortins.</text>
</comment>
<comment type="subcellular location">
    <subcellularLocation>
        <location>Cell membrane</location>
        <topology>Multi-pass membrane protein</topology>
    </subcellularLocation>
</comment>
<comment type="similarity">
    <text evidence="2">Belongs to the G-protein coupled receptor 1 family.</text>
</comment>
<gene>
    <name type="primary">MC5R</name>
</gene>
<accession>Q9TT23</accession>
<proteinExistence type="inferred from homology"/>
<evidence type="ECO:0000255" key="1"/>
<evidence type="ECO:0000255" key="2">
    <source>
        <dbReference type="PROSITE-ProRule" id="PRU00521"/>
    </source>
</evidence>
<protein>
    <recommendedName>
        <fullName>Melanocortin receptor 5</fullName>
        <shortName>MC5-R</shortName>
    </recommendedName>
</protein>
<reference key="1">
    <citation type="journal article" date="2001" name="J. Invest. Dermatol.">
        <title>Expression, candidate gene, and population studies of the melanocortin 5 receptor.</title>
        <authorList>
            <person name="Hatta N."/>
            <person name="Dixon C."/>
            <person name="Ray A.J."/>
            <person name="Phillips S.R."/>
            <person name="Cunliffe W.J."/>
            <person name="Dale M."/>
            <person name="Todd C."/>
            <person name="Meggit S."/>
            <person name="Birch-MacHin M.A."/>
            <person name="Rees J.L."/>
        </authorList>
    </citation>
    <scope>NUCLEOTIDE SEQUENCE [GENOMIC DNA]</scope>
</reference>